<feature type="chain" id="PRO_0000190942" description="Tetraacyldisaccharide 4'-kinase">
    <location>
        <begin position="1"/>
        <end position="346"/>
    </location>
</feature>
<feature type="binding site" evidence="1">
    <location>
        <begin position="54"/>
        <end position="61"/>
    </location>
    <ligand>
        <name>ATP</name>
        <dbReference type="ChEBI" id="CHEBI:30616"/>
    </ligand>
</feature>
<dbReference type="EC" id="2.7.1.130" evidence="1"/>
<dbReference type="EMBL" id="AL591688">
    <property type="protein sequence ID" value="CAC45384.1"/>
    <property type="molecule type" value="Genomic_DNA"/>
</dbReference>
<dbReference type="RefSeq" id="NP_384918.1">
    <property type="nucleotide sequence ID" value="NC_003047.1"/>
</dbReference>
<dbReference type="RefSeq" id="WP_010968838.1">
    <property type="nucleotide sequence ID" value="NC_003047.1"/>
</dbReference>
<dbReference type="SMR" id="Q92RP7"/>
<dbReference type="EnsemblBacteria" id="CAC45384">
    <property type="protein sequence ID" value="CAC45384"/>
    <property type="gene ID" value="SMc00892"/>
</dbReference>
<dbReference type="KEGG" id="sme:SMc00892"/>
<dbReference type="PATRIC" id="fig|266834.11.peg.2202"/>
<dbReference type="eggNOG" id="COG1663">
    <property type="taxonomic scope" value="Bacteria"/>
</dbReference>
<dbReference type="HOGENOM" id="CLU_038816_0_0_5"/>
<dbReference type="OrthoDB" id="9766423at2"/>
<dbReference type="UniPathway" id="UPA00359">
    <property type="reaction ID" value="UER00482"/>
</dbReference>
<dbReference type="Proteomes" id="UP000001976">
    <property type="component" value="Chromosome"/>
</dbReference>
<dbReference type="GO" id="GO:0005886">
    <property type="term" value="C:plasma membrane"/>
    <property type="evidence" value="ECO:0007669"/>
    <property type="project" value="TreeGrafter"/>
</dbReference>
<dbReference type="GO" id="GO:0005524">
    <property type="term" value="F:ATP binding"/>
    <property type="evidence" value="ECO:0007669"/>
    <property type="project" value="UniProtKB-UniRule"/>
</dbReference>
<dbReference type="GO" id="GO:0009029">
    <property type="term" value="F:tetraacyldisaccharide 4'-kinase activity"/>
    <property type="evidence" value="ECO:0007669"/>
    <property type="project" value="UniProtKB-UniRule"/>
</dbReference>
<dbReference type="GO" id="GO:0009245">
    <property type="term" value="P:lipid A biosynthetic process"/>
    <property type="evidence" value="ECO:0007669"/>
    <property type="project" value="UniProtKB-UniRule"/>
</dbReference>
<dbReference type="GO" id="GO:0009244">
    <property type="term" value="P:lipopolysaccharide core region biosynthetic process"/>
    <property type="evidence" value="ECO:0007669"/>
    <property type="project" value="TreeGrafter"/>
</dbReference>
<dbReference type="HAMAP" id="MF_00409">
    <property type="entry name" value="LpxK"/>
    <property type="match status" value="1"/>
</dbReference>
<dbReference type="InterPro" id="IPR003758">
    <property type="entry name" value="LpxK"/>
</dbReference>
<dbReference type="InterPro" id="IPR027417">
    <property type="entry name" value="P-loop_NTPase"/>
</dbReference>
<dbReference type="NCBIfam" id="TIGR00682">
    <property type="entry name" value="lpxK"/>
    <property type="match status" value="1"/>
</dbReference>
<dbReference type="PANTHER" id="PTHR42724">
    <property type="entry name" value="TETRAACYLDISACCHARIDE 4'-KINASE"/>
    <property type="match status" value="1"/>
</dbReference>
<dbReference type="PANTHER" id="PTHR42724:SF1">
    <property type="entry name" value="TETRAACYLDISACCHARIDE 4'-KINASE, MITOCHONDRIAL-RELATED"/>
    <property type="match status" value="1"/>
</dbReference>
<dbReference type="Pfam" id="PF02606">
    <property type="entry name" value="LpxK"/>
    <property type="match status" value="1"/>
</dbReference>
<dbReference type="SUPFAM" id="SSF52540">
    <property type="entry name" value="P-loop containing nucleoside triphosphate hydrolases"/>
    <property type="match status" value="1"/>
</dbReference>
<gene>
    <name evidence="1" type="primary">lpxK</name>
    <name type="ordered locus">R00812</name>
    <name type="ORF">SMc00892</name>
</gene>
<sequence length="346" mass="37360">MVSEAPPFWWTKADWRAYALWPFSWVYGRIAGMRMDRARRATSAVPLICIGNFTVGGAGKTPTAIAIARAARARGLKPAFLSRGYGGSLDVTTVVDPEHHRARDVGDEPLLLAREALTVICRRRVDGARKLAAEGADIIIMDDGFQSARLVFDFALLVVDSGRGIGNGHLVPSGPVRAPIGNQLRHANALLKLGHGSAADPLVRRAARAGKPVYVAETVRTDAGSLDGVKVLAWAGIADPEKFFKTVRETGAVIEETRSFPDHHHFSEDEIADLIDRAASRGYTLVTTAKDMVRLEPGHGRAGELAAKSRVIEIEVRFDDPAAPGKIIDAALASARARRLRERKAG</sequence>
<name>LPXK_RHIME</name>
<keyword id="KW-0067">ATP-binding</keyword>
<keyword id="KW-0418">Kinase</keyword>
<keyword id="KW-0441">Lipid A biosynthesis</keyword>
<keyword id="KW-0444">Lipid biosynthesis</keyword>
<keyword id="KW-0443">Lipid metabolism</keyword>
<keyword id="KW-0547">Nucleotide-binding</keyword>
<keyword id="KW-1185">Reference proteome</keyword>
<keyword id="KW-0808">Transferase</keyword>
<evidence type="ECO:0000255" key="1">
    <source>
        <dbReference type="HAMAP-Rule" id="MF_00409"/>
    </source>
</evidence>
<organism>
    <name type="scientific">Rhizobium meliloti (strain 1021)</name>
    <name type="common">Ensifer meliloti</name>
    <name type="synonym">Sinorhizobium meliloti</name>
    <dbReference type="NCBI Taxonomy" id="266834"/>
    <lineage>
        <taxon>Bacteria</taxon>
        <taxon>Pseudomonadati</taxon>
        <taxon>Pseudomonadota</taxon>
        <taxon>Alphaproteobacteria</taxon>
        <taxon>Hyphomicrobiales</taxon>
        <taxon>Rhizobiaceae</taxon>
        <taxon>Sinorhizobium/Ensifer group</taxon>
        <taxon>Sinorhizobium</taxon>
    </lineage>
</organism>
<reference key="1">
    <citation type="journal article" date="2001" name="Proc. Natl. Acad. Sci. U.S.A.">
        <title>Analysis of the chromosome sequence of the legume symbiont Sinorhizobium meliloti strain 1021.</title>
        <authorList>
            <person name="Capela D."/>
            <person name="Barloy-Hubler F."/>
            <person name="Gouzy J."/>
            <person name="Bothe G."/>
            <person name="Ampe F."/>
            <person name="Batut J."/>
            <person name="Boistard P."/>
            <person name="Becker A."/>
            <person name="Boutry M."/>
            <person name="Cadieu E."/>
            <person name="Dreano S."/>
            <person name="Gloux S."/>
            <person name="Godrie T."/>
            <person name="Goffeau A."/>
            <person name="Kahn D."/>
            <person name="Kiss E."/>
            <person name="Lelaure V."/>
            <person name="Masuy D."/>
            <person name="Pohl T."/>
            <person name="Portetelle D."/>
            <person name="Puehler A."/>
            <person name="Purnelle B."/>
            <person name="Ramsperger U."/>
            <person name="Renard C."/>
            <person name="Thebault P."/>
            <person name="Vandenbol M."/>
            <person name="Weidner S."/>
            <person name="Galibert F."/>
        </authorList>
    </citation>
    <scope>NUCLEOTIDE SEQUENCE [LARGE SCALE GENOMIC DNA]</scope>
    <source>
        <strain>1021</strain>
    </source>
</reference>
<reference key="2">
    <citation type="journal article" date="2001" name="Science">
        <title>The composite genome of the legume symbiont Sinorhizobium meliloti.</title>
        <authorList>
            <person name="Galibert F."/>
            <person name="Finan T.M."/>
            <person name="Long S.R."/>
            <person name="Puehler A."/>
            <person name="Abola P."/>
            <person name="Ampe F."/>
            <person name="Barloy-Hubler F."/>
            <person name="Barnett M.J."/>
            <person name="Becker A."/>
            <person name="Boistard P."/>
            <person name="Bothe G."/>
            <person name="Boutry M."/>
            <person name="Bowser L."/>
            <person name="Buhrmester J."/>
            <person name="Cadieu E."/>
            <person name="Capela D."/>
            <person name="Chain P."/>
            <person name="Cowie A."/>
            <person name="Davis R.W."/>
            <person name="Dreano S."/>
            <person name="Federspiel N.A."/>
            <person name="Fisher R.F."/>
            <person name="Gloux S."/>
            <person name="Godrie T."/>
            <person name="Goffeau A."/>
            <person name="Golding B."/>
            <person name="Gouzy J."/>
            <person name="Gurjal M."/>
            <person name="Hernandez-Lucas I."/>
            <person name="Hong A."/>
            <person name="Huizar L."/>
            <person name="Hyman R.W."/>
            <person name="Jones T."/>
            <person name="Kahn D."/>
            <person name="Kahn M.L."/>
            <person name="Kalman S."/>
            <person name="Keating D.H."/>
            <person name="Kiss E."/>
            <person name="Komp C."/>
            <person name="Lelaure V."/>
            <person name="Masuy D."/>
            <person name="Palm C."/>
            <person name="Peck M.C."/>
            <person name="Pohl T.M."/>
            <person name="Portetelle D."/>
            <person name="Purnelle B."/>
            <person name="Ramsperger U."/>
            <person name="Surzycki R."/>
            <person name="Thebault P."/>
            <person name="Vandenbol M."/>
            <person name="Vorhoelter F.J."/>
            <person name="Weidner S."/>
            <person name="Wells D.H."/>
            <person name="Wong K."/>
            <person name="Yeh K.-C."/>
            <person name="Batut J."/>
        </authorList>
    </citation>
    <scope>NUCLEOTIDE SEQUENCE [LARGE SCALE GENOMIC DNA]</scope>
    <source>
        <strain>1021</strain>
    </source>
</reference>
<accession>Q92RP7</accession>
<proteinExistence type="inferred from homology"/>
<protein>
    <recommendedName>
        <fullName evidence="1">Tetraacyldisaccharide 4'-kinase</fullName>
        <ecNumber evidence="1">2.7.1.130</ecNumber>
    </recommendedName>
    <alternativeName>
        <fullName evidence="1">Lipid A 4'-kinase</fullName>
    </alternativeName>
</protein>
<comment type="function">
    <text evidence="1">Transfers the gamma-phosphate of ATP to the 4'-position of a tetraacyldisaccharide 1-phosphate intermediate (termed DS-1-P) to form tetraacyldisaccharide 1,4'-bis-phosphate (lipid IVA).</text>
</comment>
<comment type="catalytic activity">
    <reaction evidence="1">
        <text>a lipid A disaccharide + ATP = a lipid IVA + ADP + H(+)</text>
        <dbReference type="Rhea" id="RHEA:67840"/>
        <dbReference type="ChEBI" id="CHEBI:15378"/>
        <dbReference type="ChEBI" id="CHEBI:30616"/>
        <dbReference type="ChEBI" id="CHEBI:176343"/>
        <dbReference type="ChEBI" id="CHEBI:176425"/>
        <dbReference type="ChEBI" id="CHEBI:456216"/>
        <dbReference type="EC" id="2.7.1.130"/>
    </reaction>
</comment>
<comment type="pathway">
    <text evidence="1">Glycolipid biosynthesis; lipid IV(A) biosynthesis; lipid IV(A) from (3R)-3-hydroxytetradecanoyl-[acyl-carrier-protein] and UDP-N-acetyl-alpha-D-glucosamine: step 6/6.</text>
</comment>
<comment type="similarity">
    <text evidence="1">Belongs to the LpxK family.</text>
</comment>